<sequence length="206" mass="24089">MARYTGPDCRLCRREGMKLFLKGTKCFSEKCPFERRPFAPGQHGRAQRKLTEYGLRLREKQRAKRIYGVLERQFRRYFEIASKGRGVTGERLLQLLETRLDNVVYRLGWALSRDQARQLVSHGKIAVNGKRVNIPSYNLKPGDVVELLDKDLIPVQEAISVFGNKNVPAWLELDRENFRGRVLRLPKREEIDTPVQEQLIVEFYSR</sequence>
<name>RS4_DICT6</name>
<accession>B5YDW9</accession>
<proteinExistence type="inferred from homology"/>
<comment type="function">
    <text evidence="1">One of the primary rRNA binding proteins, it binds directly to 16S rRNA where it nucleates assembly of the body of the 30S subunit.</text>
</comment>
<comment type="function">
    <text evidence="1">With S5 and S12 plays an important role in translational accuracy.</text>
</comment>
<comment type="subunit">
    <text evidence="1">Part of the 30S ribosomal subunit. Contacts protein S5. The interaction surface between S4 and S5 is involved in control of translational fidelity.</text>
</comment>
<comment type="similarity">
    <text evidence="1">Belongs to the universal ribosomal protein uS4 family.</text>
</comment>
<organism>
    <name type="scientific">Dictyoglomus thermophilum (strain ATCC 35947 / DSM 3960 / H-6-12)</name>
    <dbReference type="NCBI Taxonomy" id="309799"/>
    <lineage>
        <taxon>Bacteria</taxon>
        <taxon>Pseudomonadati</taxon>
        <taxon>Dictyoglomota</taxon>
        <taxon>Dictyoglomia</taxon>
        <taxon>Dictyoglomales</taxon>
        <taxon>Dictyoglomaceae</taxon>
        <taxon>Dictyoglomus</taxon>
    </lineage>
</organism>
<feature type="chain" id="PRO_1000140722" description="Small ribosomal subunit protein uS4">
    <location>
        <begin position="1"/>
        <end position="206"/>
    </location>
</feature>
<feature type="domain" description="S4 RNA-binding" evidence="1">
    <location>
        <begin position="98"/>
        <end position="155"/>
    </location>
</feature>
<gene>
    <name evidence="1" type="primary">rpsD</name>
    <name type="ordered locus">DICTH_0863</name>
</gene>
<evidence type="ECO:0000255" key="1">
    <source>
        <dbReference type="HAMAP-Rule" id="MF_01306"/>
    </source>
</evidence>
<evidence type="ECO:0000305" key="2"/>
<protein>
    <recommendedName>
        <fullName evidence="1">Small ribosomal subunit protein uS4</fullName>
    </recommendedName>
    <alternativeName>
        <fullName evidence="2">30S ribosomal protein S4</fullName>
    </alternativeName>
</protein>
<dbReference type="EMBL" id="CP001146">
    <property type="protein sequence ID" value="ACI18279.1"/>
    <property type="molecule type" value="Genomic_DNA"/>
</dbReference>
<dbReference type="RefSeq" id="WP_012546911.1">
    <property type="nucleotide sequence ID" value="NC_011297.1"/>
</dbReference>
<dbReference type="SMR" id="B5YDW9"/>
<dbReference type="STRING" id="309799.DICTH_0863"/>
<dbReference type="PaxDb" id="309799-DICTH_0863"/>
<dbReference type="KEGG" id="dth:DICTH_0863"/>
<dbReference type="eggNOG" id="COG0522">
    <property type="taxonomic scope" value="Bacteria"/>
</dbReference>
<dbReference type="HOGENOM" id="CLU_092403_0_2_0"/>
<dbReference type="OrthoDB" id="9803672at2"/>
<dbReference type="Proteomes" id="UP000001733">
    <property type="component" value="Chromosome"/>
</dbReference>
<dbReference type="GO" id="GO:0015935">
    <property type="term" value="C:small ribosomal subunit"/>
    <property type="evidence" value="ECO:0007669"/>
    <property type="project" value="InterPro"/>
</dbReference>
<dbReference type="GO" id="GO:0019843">
    <property type="term" value="F:rRNA binding"/>
    <property type="evidence" value="ECO:0007669"/>
    <property type="project" value="UniProtKB-UniRule"/>
</dbReference>
<dbReference type="GO" id="GO:0003735">
    <property type="term" value="F:structural constituent of ribosome"/>
    <property type="evidence" value="ECO:0007669"/>
    <property type="project" value="InterPro"/>
</dbReference>
<dbReference type="GO" id="GO:0042274">
    <property type="term" value="P:ribosomal small subunit biogenesis"/>
    <property type="evidence" value="ECO:0007669"/>
    <property type="project" value="TreeGrafter"/>
</dbReference>
<dbReference type="GO" id="GO:0006412">
    <property type="term" value="P:translation"/>
    <property type="evidence" value="ECO:0007669"/>
    <property type="project" value="UniProtKB-UniRule"/>
</dbReference>
<dbReference type="CDD" id="cd00165">
    <property type="entry name" value="S4"/>
    <property type="match status" value="1"/>
</dbReference>
<dbReference type="FunFam" id="1.10.1050.10:FF:000001">
    <property type="entry name" value="30S ribosomal protein S4"/>
    <property type="match status" value="1"/>
</dbReference>
<dbReference type="FunFam" id="3.10.290.10:FF:000001">
    <property type="entry name" value="30S ribosomal protein S4"/>
    <property type="match status" value="1"/>
</dbReference>
<dbReference type="Gene3D" id="1.10.1050.10">
    <property type="entry name" value="Ribosomal Protein S4 Delta 41, Chain A, domain 1"/>
    <property type="match status" value="1"/>
</dbReference>
<dbReference type="Gene3D" id="3.10.290.10">
    <property type="entry name" value="RNA-binding S4 domain"/>
    <property type="match status" value="1"/>
</dbReference>
<dbReference type="HAMAP" id="MF_01306_B">
    <property type="entry name" value="Ribosomal_uS4_B"/>
    <property type="match status" value="1"/>
</dbReference>
<dbReference type="InterPro" id="IPR022801">
    <property type="entry name" value="Ribosomal_uS4"/>
</dbReference>
<dbReference type="InterPro" id="IPR005709">
    <property type="entry name" value="Ribosomal_uS4_bac-type"/>
</dbReference>
<dbReference type="InterPro" id="IPR018079">
    <property type="entry name" value="Ribosomal_uS4_CS"/>
</dbReference>
<dbReference type="InterPro" id="IPR001912">
    <property type="entry name" value="Ribosomal_uS4_N"/>
</dbReference>
<dbReference type="InterPro" id="IPR002942">
    <property type="entry name" value="S4_RNA-bd"/>
</dbReference>
<dbReference type="InterPro" id="IPR036986">
    <property type="entry name" value="S4_RNA-bd_sf"/>
</dbReference>
<dbReference type="NCBIfam" id="NF003717">
    <property type="entry name" value="PRK05327.1"/>
    <property type="match status" value="1"/>
</dbReference>
<dbReference type="NCBIfam" id="TIGR01017">
    <property type="entry name" value="rpsD_bact"/>
    <property type="match status" value="1"/>
</dbReference>
<dbReference type="PANTHER" id="PTHR11831">
    <property type="entry name" value="30S 40S RIBOSOMAL PROTEIN"/>
    <property type="match status" value="1"/>
</dbReference>
<dbReference type="PANTHER" id="PTHR11831:SF4">
    <property type="entry name" value="SMALL RIBOSOMAL SUBUNIT PROTEIN US4M"/>
    <property type="match status" value="1"/>
</dbReference>
<dbReference type="Pfam" id="PF00163">
    <property type="entry name" value="Ribosomal_S4"/>
    <property type="match status" value="1"/>
</dbReference>
<dbReference type="Pfam" id="PF01479">
    <property type="entry name" value="S4"/>
    <property type="match status" value="1"/>
</dbReference>
<dbReference type="SMART" id="SM01390">
    <property type="entry name" value="Ribosomal_S4"/>
    <property type="match status" value="1"/>
</dbReference>
<dbReference type="SMART" id="SM00363">
    <property type="entry name" value="S4"/>
    <property type="match status" value="1"/>
</dbReference>
<dbReference type="SUPFAM" id="SSF55174">
    <property type="entry name" value="Alpha-L RNA-binding motif"/>
    <property type="match status" value="1"/>
</dbReference>
<dbReference type="PROSITE" id="PS00632">
    <property type="entry name" value="RIBOSOMAL_S4"/>
    <property type="match status" value="1"/>
</dbReference>
<dbReference type="PROSITE" id="PS50889">
    <property type="entry name" value="S4"/>
    <property type="match status" value="1"/>
</dbReference>
<reference key="1">
    <citation type="journal article" date="2014" name="Genome Announc.">
        <title>Complete Genome Sequence of the Extreme Thermophile Dictyoglomus thermophilum H-6-12.</title>
        <authorList>
            <person name="Coil D.A."/>
            <person name="Badger J.H."/>
            <person name="Forberger H.C."/>
            <person name="Riggs F."/>
            <person name="Madupu R."/>
            <person name="Fedorova N."/>
            <person name="Ward N."/>
            <person name="Robb F.T."/>
            <person name="Eisen J.A."/>
        </authorList>
    </citation>
    <scope>NUCLEOTIDE SEQUENCE [LARGE SCALE GENOMIC DNA]</scope>
    <source>
        <strain>ATCC 35947 / DSM 3960 / H-6-12</strain>
    </source>
</reference>
<keyword id="KW-0687">Ribonucleoprotein</keyword>
<keyword id="KW-0689">Ribosomal protein</keyword>
<keyword id="KW-0694">RNA-binding</keyword>
<keyword id="KW-0699">rRNA-binding</keyword>